<reference key="1">
    <citation type="submission" date="2007-07" db="EMBL/GenBank/DDBJ databases">
        <authorList>
            <consortium name="NIH - Mammalian Gene Collection (MGC) project"/>
        </authorList>
    </citation>
    <scope>NUCLEOTIDE SEQUENCE [LARGE SCALE MRNA]</scope>
    <source>
        <strain>Hereford</strain>
        <tissue>Hypothalamus</tissue>
    </source>
</reference>
<accession>A7MB34</accession>
<protein>
    <recommendedName>
        <fullName>Protein FAM181B</fullName>
    </recommendedName>
</protein>
<name>F181B_BOVIN</name>
<dbReference type="EMBL" id="BC151312">
    <property type="protein sequence ID" value="AAI51313.1"/>
    <property type="molecule type" value="mRNA"/>
</dbReference>
<dbReference type="RefSeq" id="NP_001094693.1">
    <property type="nucleotide sequence ID" value="NM_001101223.2"/>
</dbReference>
<dbReference type="FunCoup" id="A7MB34">
    <property type="interactions" value="134"/>
</dbReference>
<dbReference type="STRING" id="9913.ENSBTAP00000008954"/>
<dbReference type="PaxDb" id="9913-ENSBTAP00000008954"/>
<dbReference type="Ensembl" id="ENSBTAT00000008954.6">
    <property type="protein sequence ID" value="ENSBTAP00000008954.5"/>
    <property type="gene ID" value="ENSBTAG00000006812.6"/>
</dbReference>
<dbReference type="GeneID" id="613623"/>
<dbReference type="KEGG" id="bta:613623"/>
<dbReference type="CTD" id="220382"/>
<dbReference type="VEuPathDB" id="HostDB:ENSBTAG00000006812"/>
<dbReference type="VGNC" id="VGNC:28764">
    <property type="gene designation" value="FAM181B"/>
</dbReference>
<dbReference type="eggNOG" id="ENOG502QS8E">
    <property type="taxonomic scope" value="Eukaryota"/>
</dbReference>
<dbReference type="GeneTree" id="ENSGT00940000154730"/>
<dbReference type="HOGENOM" id="CLU_055561_0_0_1"/>
<dbReference type="InParanoid" id="A7MB34"/>
<dbReference type="OMA" id="PNFFTDC"/>
<dbReference type="OrthoDB" id="5981837at2759"/>
<dbReference type="TreeFam" id="TF333276"/>
<dbReference type="Proteomes" id="UP000009136">
    <property type="component" value="Chromosome 29"/>
</dbReference>
<dbReference type="Bgee" id="ENSBTAG00000006812">
    <property type="expression patterns" value="Expressed in Ammon's horn and 89 other cell types or tissues"/>
</dbReference>
<dbReference type="InterPro" id="IPR029359">
    <property type="entry name" value="FAM181"/>
</dbReference>
<dbReference type="InterPro" id="IPR053819">
    <property type="entry name" value="TEADIR3_omega_loop"/>
</dbReference>
<dbReference type="PANTHER" id="PTHR33766">
    <property type="entry name" value="PROTEIN FAM181B"/>
    <property type="match status" value="1"/>
</dbReference>
<dbReference type="PANTHER" id="PTHR33766:SF2">
    <property type="entry name" value="PROTEIN FAM181B"/>
    <property type="match status" value="1"/>
</dbReference>
<dbReference type="Pfam" id="PF15238">
    <property type="entry name" value="TEADIR3"/>
    <property type="match status" value="1"/>
</dbReference>
<keyword id="KW-1185">Reference proteome</keyword>
<evidence type="ECO:0000256" key="1">
    <source>
        <dbReference type="SAM" id="MobiDB-lite"/>
    </source>
</evidence>
<evidence type="ECO:0000305" key="2"/>
<organism>
    <name type="scientific">Bos taurus</name>
    <name type="common">Bovine</name>
    <dbReference type="NCBI Taxonomy" id="9913"/>
    <lineage>
        <taxon>Eukaryota</taxon>
        <taxon>Metazoa</taxon>
        <taxon>Chordata</taxon>
        <taxon>Craniata</taxon>
        <taxon>Vertebrata</taxon>
        <taxon>Euteleostomi</taxon>
        <taxon>Mammalia</taxon>
        <taxon>Eutheria</taxon>
        <taxon>Laurasiatheria</taxon>
        <taxon>Artiodactyla</taxon>
        <taxon>Ruminantia</taxon>
        <taxon>Pecora</taxon>
        <taxon>Bovidae</taxon>
        <taxon>Bovinae</taxon>
        <taxon>Bos</taxon>
    </lineage>
</organism>
<sequence length="419" mass="41983">MAVQAALLSTHPFVPFGFGGSPDGLGGAFGALEKGCCFEDEETGTPAGALLAGAESGDAREATRDLLSFIDSASSNIKLALDKPGKSKRKVNHRKYLQKQIKRCSGLMGAAPPGPSSPGAADTPAKRPLAGAQTVPVPVPAHGKAAPRREASQAAAAASLQSRSLAALFDSLRHVPGGADPAGVAEAVPAAGLVRGDAAGSAGGPAVPGARKVPLRARNLPPSFFTEPSRAGGCVCGPSGPGVSLGDLEKGSEAAEFFELLGPDYGAGTEAGALLAAEPLDVFPAGAAVLRGPPELEPGLFDPQPAMVGSLLYPEPWSAPGGPATKKPPLPAPGGGLTLNEPLRSVYPAAADSPGGDDGPGLLASFTPFFSDCALPPAPPPQQVSYDYSAGYSRTAFAGLWRPDGAWEGAPGEEGAPRD</sequence>
<gene>
    <name type="primary">FAM181B</name>
</gene>
<comment type="similarity">
    <text evidence="2">Belongs to the FAM181 family.</text>
</comment>
<proteinExistence type="evidence at transcript level"/>
<feature type="chain" id="PRO_0000324301" description="Protein FAM181B">
    <location>
        <begin position="1"/>
        <end position="419"/>
    </location>
</feature>
<feature type="region of interest" description="Disordered" evidence="1">
    <location>
        <begin position="107"/>
        <end position="157"/>
    </location>
</feature>